<feature type="chain" id="PRO_0000092452" description="Lipoprotein-releasing system ATP-binding protein LolD">
    <location>
        <begin position="1"/>
        <end position="226"/>
    </location>
</feature>
<feature type="domain" description="ABC transporter" evidence="1">
    <location>
        <begin position="6"/>
        <end position="226"/>
    </location>
</feature>
<feature type="binding site" evidence="1">
    <location>
        <begin position="42"/>
        <end position="49"/>
    </location>
    <ligand>
        <name>ATP</name>
        <dbReference type="ChEBI" id="CHEBI:30616"/>
    </ligand>
</feature>
<accession>Q98KS7</accession>
<comment type="function">
    <text evidence="1">Part of the ABC transporter complex LolCDE involved in the translocation of mature outer membrane-directed lipoproteins, from the inner membrane to the periplasmic chaperone, LolA. Responsible for the formation of the LolA-lipoprotein complex in an ATP-dependent manner.</text>
</comment>
<comment type="subunit">
    <text evidence="1">The complex is composed of two ATP-binding proteins (LolD) and two transmembrane proteins (LolC and LolE).</text>
</comment>
<comment type="subcellular location">
    <subcellularLocation>
        <location evidence="1">Cell inner membrane</location>
        <topology evidence="1">Peripheral membrane protein</topology>
    </subcellularLocation>
</comment>
<comment type="similarity">
    <text evidence="1">Belongs to the ABC transporter superfamily. Lipoprotein translocase (TC 3.A.1.125) family.</text>
</comment>
<comment type="sequence caution" evidence="2">
    <conflict type="erroneous initiation">
        <sequence resource="EMBL-CDS" id="BAB48737"/>
    </conflict>
</comment>
<gene>
    <name evidence="1" type="primary">lolD</name>
    <name type="ordered locus">mll1341</name>
</gene>
<name>LOLD_RHILO</name>
<sequence length="226" mass="24457">MAEVIIELKSVERHYVQGPRKLTILNGADFSLKRGEMVALVAPSGTGKSTLLHTAGLLERPDAGDVILAGRACGRLSDDERTAIRRNDVGFVYQFHHLLPEFSALENIMMPQLIKGLPRKEAAERAAQLLDYMQIGKRASHRPSELSGGEQQRVAIARAVANAPLVLLADEPTGNLDPVTASYVFEALGALVKQSGLAALIATHNHELASRMDRRVTLADGKVVPL</sequence>
<organism>
    <name type="scientific">Mesorhizobium japonicum (strain LMG 29417 / CECT 9101 / MAFF 303099)</name>
    <name type="common">Mesorhizobium loti (strain MAFF 303099)</name>
    <dbReference type="NCBI Taxonomy" id="266835"/>
    <lineage>
        <taxon>Bacteria</taxon>
        <taxon>Pseudomonadati</taxon>
        <taxon>Pseudomonadota</taxon>
        <taxon>Alphaproteobacteria</taxon>
        <taxon>Hyphomicrobiales</taxon>
        <taxon>Phyllobacteriaceae</taxon>
        <taxon>Mesorhizobium</taxon>
    </lineage>
</organism>
<protein>
    <recommendedName>
        <fullName evidence="1">Lipoprotein-releasing system ATP-binding protein LolD</fullName>
        <ecNumber evidence="1">7.6.2.-</ecNumber>
    </recommendedName>
</protein>
<reference key="1">
    <citation type="journal article" date="2000" name="DNA Res.">
        <title>Complete genome structure of the nitrogen-fixing symbiotic bacterium Mesorhizobium loti.</title>
        <authorList>
            <person name="Kaneko T."/>
            <person name="Nakamura Y."/>
            <person name="Sato S."/>
            <person name="Asamizu E."/>
            <person name="Kato T."/>
            <person name="Sasamoto S."/>
            <person name="Watanabe A."/>
            <person name="Idesawa K."/>
            <person name="Ishikawa A."/>
            <person name="Kawashima K."/>
            <person name="Kimura T."/>
            <person name="Kishida Y."/>
            <person name="Kiyokawa C."/>
            <person name="Kohara M."/>
            <person name="Matsumoto M."/>
            <person name="Matsuno A."/>
            <person name="Mochizuki Y."/>
            <person name="Nakayama S."/>
            <person name="Nakazaki N."/>
            <person name="Shimpo S."/>
            <person name="Sugimoto M."/>
            <person name="Takeuchi C."/>
            <person name="Yamada M."/>
            <person name="Tabata S."/>
        </authorList>
    </citation>
    <scope>NUCLEOTIDE SEQUENCE [LARGE SCALE GENOMIC DNA]</scope>
    <source>
        <strain>LMG 29417 / CECT 9101 / MAFF 303099</strain>
    </source>
</reference>
<keyword id="KW-0067">ATP-binding</keyword>
<keyword id="KW-0997">Cell inner membrane</keyword>
<keyword id="KW-1003">Cell membrane</keyword>
<keyword id="KW-0472">Membrane</keyword>
<keyword id="KW-0547">Nucleotide-binding</keyword>
<keyword id="KW-1278">Translocase</keyword>
<keyword id="KW-0813">Transport</keyword>
<dbReference type="EC" id="7.6.2.-" evidence="1"/>
<dbReference type="EMBL" id="BA000012">
    <property type="protein sequence ID" value="BAB48737.1"/>
    <property type="status" value="ALT_INIT"/>
    <property type="molecule type" value="Genomic_DNA"/>
</dbReference>
<dbReference type="SMR" id="Q98KS7"/>
<dbReference type="KEGG" id="mlo:mll1341"/>
<dbReference type="eggNOG" id="COG1136">
    <property type="taxonomic scope" value="Bacteria"/>
</dbReference>
<dbReference type="HOGENOM" id="CLU_000604_1_22_5"/>
<dbReference type="Proteomes" id="UP000000552">
    <property type="component" value="Chromosome"/>
</dbReference>
<dbReference type="GO" id="GO:0005886">
    <property type="term" value="C:plasma membrane"/>
    <property type="evidence" value="ECO:0007669"/>
    <property type="project" value="UniProtKB-SubCell"/>
</dbReference>
<dbReference type="GO" id="GO:0005524">
    <property type="term" value="F:ATP binding"/>
    <property type="evidence" value="ECO:0007669"/>
    <property type="project" value="UniProtKB-KW"/>
</dbReference>
<dbReference type="GO" id="GO:0016887">
    <property type="term" value="F:ATP hydrolysis activity"/>
    <property type="evidence" value="ECO:0007669"/>
    <property type="project" value="InterPro"/>
</dbReference>
<dbReference type="GO" id="GO:0022857">
    <property type="term" value="F:transmembrane transporter activity"/>
    <property type="evidence" value="ECO:0007669"/>
    <property type="project" value="TreeGrafter"/>
</dbReference>
<dbReference type="GO" id="GO:0044874">
    <property type="term" value="P:lipoprotein localization to outer membrane"/>
    <property type="evidence" value="ECO:0007669"/>
    <property type="project" value="TreeGrafter"/>
</dbReference>
<dbReference type="GO" id="GO:0089705">
    <property type="term" value="P:protein localization to outer membrane"/>
    <property type="evidence" value="ECO:0007669"/>
    <property type="project" value="TreeGrafter"/>
</dbReference>
<dbReference type="CDD" id="cd03255">
    <property type="entry name" value="ABC_MJ0796_LolCDE_FtsE"/>
    <property type="match status" value="1"/>
</dbReference>
<dbReference type="FunFam" id="3.40.50.300:FF:000032">
    <property type="entry name" value="Export ABC transporter ATP-binding protein"/>
    <property type="match status" value="1"/>
</dbReference>
<dbReference type="Gene3D" id="3.40.50.300">
    <property type="entry name" value="P-loop containing nucleotide triphosphate hydrolases"/>
    <property type="match status" value="1"/>
</dbReference>
<dbReference type="InterPro" id="IPR003593">
    <property type="entry name" value="AAA+_ATPase"/>
</dbReference>
<dbReference type="InterPro" id="IPR003439">
    <property type="entry name" value="ABC_transporter-like_ATP-bd"/>
</dbReference>
<dbReference type="InterPro" id="IPR017871">
    <property type="entry name" value="ABC_transporter-like_CS"/>
</dbReference>
<dbReference type="InterPro" id="IPR015854">
    <property type="entry name" value="ABC_transpr_LolD-like"/>
</dbReference>
<dbReference type="InterPro" id="IPR017911">
    <property type="entry name" value="MacB-like_ATP-bd"/>
</dbReference>
<dbReference type="InterPro" id="IPR027417">
    <property type="entry name" value="P-loop_NTPase"/>
</dbReference>
<dbReference type="PANTHER" id="PTHR24220">
    <property type="entry name" value="IMPORT ATP-BINDING PROTEIN"/>
    <property type="match status" value="1"/>
</dbReference>
<dbReference type="PANTHER" id="PTHR24220:SF689">
    <property type="entry name" value="LIPOPROTEIN-RELEASING SYSTEM ATP-BINDING PROTEIN LOLD"/>
    <property type="match status" value="1"/>
</dbReference>
<dbReference type="Pfam" id="PF00005">
    <property type="entry name" value="ABC_tran"/>
    <property type="match status" value="1"/>
</dbReference>
<dbReference type="SMART" id="SM00382">
    <property type="entry name" value="AAA"/>
    <property type="match status" value="1"/>
</dbReference>
<dbReference type="SUPFAM" id="SSF52540">
    <property type="entry name" value="P-loop containing nucleoside triphosphate hydrolases"/>
    <property type="match status" value="1"/>
</dbReference>
<dbReference type="PROSITE" id="PS00211">
    <property type="entry name" value="ABC_TRANSPORTER_1"/>
    <property type="match status" value="1"/>
</dbReference>
<dbReference type="PROSITE" id="PS50893">
    <property type="entry name" value="ABC_TRANSPORTER_2"/>
    <property type="match status" value="1"/>
</dbReference>
<dbReference type="PROSITE" id="PS51244">
    <property type="entry name" value="LOLD"/>
    <property type="match status" value="1"/>
</dbReference>
<evidence type="ECO:0000255" key="1">
    <source>
        <dbReference type="HAMAP-Rule" id="MF_01708"/>
    </source>
</evidence>
<evidence type="ECO:0000305" key="2"/>
<proteinExistence type="inferred from homology"/>